<dbReference type="EMBL" id="X96636">
    <property type="protein sequence ID" value="CAA65441.1"/>
    <property type="status" value="ALT_INIT"/>
    <property type="molecule type" value="mRNA"/>
</dbReference>
<dbReference type="EMBL" id="Z73428">
    <property type="protein sequence ID" value="CAA97809.1"/>
    <property type="molecule type" value="Genomic_DNA"/>
</dbReference>
<dbReference type="PIR" id="T23763">
    <property type="entry name" value="T23763"/>
</dbReference>
<dbReference type="PIR" id="T43629">
    <property type="entry name" value="T43629"/>
</dbReference>
<dbReference type="RefSeq" id="NP_499401.1">
    <property type="nucleotide sequence ID" value="NM_067000.6"/>
</dbReference>
<dbReference type="SMR" id="Q93899"/>
<dbReference type="BioGRID" id="41708">
    <property type="interactions" value="12"/>
</dbReference>
<dbReference type="FunCoup" id="Q93899">
    <property type="interactions" value="95"/>
</dbReference>
<dbReference type="IntAct" id="Q93899">
    <property type="interactions" value="9"/>
</dbReference>
<dbReference type="STRING" id="6239.M142.4.1"/>
<dbReference type="PaxDb" id="6239-M142.4"/>
<dbReference type="EnsemblMetazoa" id="M142.4.1">
    <property type="protein sequence ID" value="M142.4.1"/>
    <property type="gene ID" value="WBGene00006873"/>
</dbReference>
<dbReference type="GeneID" id="176521"/>
<dbReference type="KEGG" id="cel:CELE_M142.4"/>
<dbReference type="UCSC" id="M142.4">
    <property type="organism name" value="c. elegans"/>
</dbReference>
<dbReference type="AGR" id="WB:WBGene00006873"/>
<dbReference type="CTD" id="176521"/>
<dbReference type="WormBase" id="M142.4">
    <property type="protein sequence ID" value="CE12432"/>
    <property type="gene ID" value="WBGene00006873"/>
    <property type="gene designation" value="vab-7"/>
</dbReference>
<dbReference type="eggNOG" id="KOG0844">
    <property type="taxonomic scope" value="Eukaryota"/>
</dbReference>
<dbReference type="GeneTree" id="ENSGT00940000168391"/>
<dbReference type="HOGENOM" id="CLU_1103598_0_0_1"/>
<dbReference type="InParanoid" id="Q93899"/>
<dbReference type="OMA" id="YDNRDDG"/>
<dbReference type="OrthoDB" id="6159439at2759"/>
<dbReference type="SignaLink" id="Q93899"/>
<dbReference type="PRO" id="PR:Q93899"/>
<dbReference type="Proteomes" id="UP000001940">
    <property type="component" value="Chromosome III"/>
</dbReference>
<dbReference type="Bgee" id="WBGene00006873">
    <property type="expression patterns" value="Expressed in embryonic cell and 9 other cell types or tissues"/>
</dbReference>
<dbReference type="GO" id="GO:0005634">
    <property type="term" value="C:nucleus"/>
    <property type="evidence" value="ECO:0000314"/>
    <property type="project" value="WormBase"/>
</dbReference>
<dbReference type="GO" id="GO:0000981">
    <property type="term" value="F:DNA-binding transcription factor activity, RNA polymerase II-specific"/>
    <property type="evidence" value="ECO:0000318"/>
    <property type="project" value="GO_Central"/>
</dbReference>
<dbReference type="GO" id="GO:0000978">
    <property type="term" value="F:RNA polymerase II cis-regulatory region sequence-specific DNA binding"/>
    <property type="evidence" value="ECO:0000318"/>
    <property type="project" value="GO_Central"/>
</dbReference>
<dbReference type="GO" id="GO:0001708">
    <property type="term" value="P:cell fate specification"/>
    <property type="evidence" value="ECO:0000315"/>
    <property type="project" value="UniProtKB"/>
</dbReference>
<dbReference type="GO" id="GO:0000122">
    <property type="term" value="P:negative regulation of transcription by RNA polymerase II"/>
    <property type="evidence" value="ECO:0000315"/>
    <property type="project" value="UniProtKB"/>
</dbReference>
<dbReference type="GO" id="GO:0006357">
    <property type="term" value="P:regulation of transcription by RNA polymerase II"/>
    <property type="evidence" value="ECO:0000318"/>
    <property type="project" value="GO_Central"/>
</dbReference>
<dbReference type="CDD" id="cd00086">
    <property type="entry name" value="homeodomain"/>
    <property type="match status" value="1"/>
</dbReference>
<dbReference type="Gene3D" id="1.10.10.60">
    <property type="entry name" value="Homeodomain-like"/>
    <property type="match status" value="1"/>
</dbReference>
<dbReference type="InterPro" id="IPR052002">
    <property type="entry name" value="Even-skipped_HD"/>
</dbReference>
<dbReference type="InterPro" id="IPR001356">
    <property type="entry name" value="HD"/>
</dbReference>
<dbReference type="InterPro" id="IPR017970">
    <property type="entry name" value="Homeobox_CS"/>
</dbReference>
<dbReference type="InterPro" id="IPR009057">
    <property type="entry name" value="Homeodomain-like_sf"/>
</dbReference>
<dbReference type="PANTHER" id="PTHR46294">
    <property type="entry name" value="SEGMENTATION PROTEIN EVEN-SKIPPED"/>
    <property type="match status" value="1"/>
</dbReference>
<dbReference type="PANTHER" id="PTHR46294:SF4">
    <property type="entry name" value="SEGMENTATION PROTEIN EVEN-SKIPPED"/>
    <property type="match status" value="1"/>
</dbReference>
<dbReference type="Pfam" id="PF00046">
    <property type="entry name" value="Homeodomain"/>
    <property type="match status" value="1"/>
</dbReference>
<dbReference type="SMART" id="SM00389">
    <property type="entry name" value="HOX"/>
    <property type="match status" value="1"/>
</dbReference>
<dbReference type="SUPFAM" id="SSF46689">
    <property type="entry name" value="Homeodomain-like"/>
    <property type="match status" value="1"/>
</dbReference>
<dbReference type="PROSITE" id="PS00027">
    <property type="entry name" value="HOMEOBOX_1"/>
    <property type="match status" value="1"/>
</dbReference>
<dbReference type="PROSITE" id="PS50071">
    <property type="entry name" value="HOMEOBOX_2"/>
    <property type="match status" value="1"/>
</dbReference>
<name>VAB7_CAEEL</name>
<sequence>MQSFDIESLIGVNKVPSLVEMVAASRASSFSPPFEQQHHDPMGVVAAAAAAAAAGRHHPYDNRDDGQMRRYRTAFSREQIGRLEREFAKENYVSRKTRGELAAELNLPEGTIKVWFQNRRMKDKRQRVGGLAWPFPPQMAAYMLNPFAYEMWMKTAAASQFGATGPGNGAYGNNGSSTSPSAAGSLPFLPPLGFPSFLSQNSTKSPSSPHSDDSSKSKNTSSDDDESKPVNFSNSPSSSSPSPYSTD</sequence>
<keyword id="KW-0217">Developmental protein</keyword>
<keyword id="KW-0238">DNA-binding</keyword>
<keyword id="KW-0371">Homeobox</keyword>
<keyword id="KW-0539">Nucleus</keyword>
<keyword id="KW-1185">Reference proteome</keyword>
<keyword id="KW-0804">Transcription</keyword>
<keyword id="KW-0805">Transcription regulation</keyword>
<protein>
    <recommendedName>
        <fullName>Homeobox protein vab-7</fullName>
    </recommendedName>
</protein>
<organism>
    <name type="scientific">Caenorhabditis elegans</name>
    <dbReference type="NCBI Taxonomy" id="6239"/>
    <lineage>
        <taxon>Eukaryota</taxon>
        <taxon>Metazoa</taxon>
        <taxon>Ecdysozoa</taxon>
        <taxon>Nematoda</taxon>
        <taxon>Chromadorea</taxon>
        <taxon>Rhabditida</taxon>
        <taxon>Rhabditina</taxon>
        <taxon>Rhabditomorpha</taxon>
        <taxon>Rhabditoidea</taxon>
        <taxon>Rhabditidae</taxon>
        <taxon>Peloderinae</taxon>
        <taxon>Caenorhabditis</taxon>
    </lineage>
</organism>
<reference key="1">
    <citation type="journal article" date="1996" name="Genes Dev.">
        <title>Posterior patterning by the Caenorhabditis elegans even-skipped homolog vab-7.</title>
        <authorList>
            <person name="Ahringer J."/>
        </authorList>
    </citation>
    <scope>NUCLEOTIDE SEQUENCE [MRNA]</scope>
    <scope>FUNCTION</scope>
    <scope>MUTAGENESIS OF ARG-119</scope>
    <source>
        <strain>Bristol N2</strain>
        <tissue>Embryo</tissue>
    </source>
</reference>
<reference key="2">
    <citation type="journal article" date="1998" name="Science">
        <title>Genome sequence of the nematode C. elegans: a platform for investigating biology.</title>
        <authorList>
            <consortium name="The C. elegans sequencing consortium"/>
        </authorList>
    </citation>
    <scope>NUCLEOTIDE SEQUENCE [LARGE SCALE GENOMIC DNA]</scope>
    <source>
        <strain>Bristol N2</strain>
    </source>
</reference>
<reference evidence="5" key="3">
    <citation type="journal article" date="2017" name="Neuron">
        <title>Diversification of C. elegans Motor Neuron Identity via Selective Effector Gene Repression.</title>
        <authorList>
            <person name="Kerk S.Y."/>
            <person name="Kratsios P."/>
            <person name="Hart M."/>
            <person name="Mourao R."/>
            <person name="Hobert O."/>
        </authorList>
    </citation>
    <scope>FUNCTION</scope>
</reference>
<proteinExistence type="evidence at protein level"/>
<comment type="function">
    <text evidence="3 4">Transcription factor (PubMed:28056346). Involved in motor neuron fate determination and maintenance, acting as a transcriptional repressor to counteract gene activation by transcription factor unc-3 in a subset of motor neurons (PubMed:28056346). Probably acts by binding to specific promoter elements (PubMed:28056346). Required for posterior-specific pattern formation in the embryo and may have a role in regulating egl-5 expression (PubMed:8654927).</text>
</comment>
<comment type="subcellular location">
    <subcellularLocation>
        <location>Nucleus</location>
    </subcellularLocation>
</comment>
<comment type="developmental stage">
    <text evidence="4">Embryo, L1 and L2 larvae.</text>
</comment>
<comment type="similarity">
    <text evidence="5">Belongs to the even-skipped homeobox family.</text>
</comment>
<comment type="sequence caution" evidence="5">
    <conflict type="erroneous initiation">
        <sequence resource="EMBL-CDS" id="CAA65441"/>
    </conflict>
</comment>
<evidence type="ECO:0000255" key="1">
    <source>
        <dbReference type="PROSITE-ProRule" id="PRU00108"/>
    </source>
</evidence>
<evidence type="ECO:0000256" key="2">
    <source>
        <dbReference type="SAM" id="MobiDB-lite"/>
    </source>
</evidence>
<evidence type="ECO:0000269" key="3">
    <source>
    </source>
</evidence>
<evidence type="ECO:0000269" key="4">
    <source>
    </source>
</evidence>
<evidence type="ECO:0000305" key="5"/>
<accession>Q93899</accession>
<accession>Q23093</accession>
<gene>
    <name type="primary">vab-7</name>
    <name type="ORF">M142.4</name>
</gene>
<feature type="chain" id="PRO_0000049349" description="Homeobox protein vab-7">
    <location>
        <begin position="1"/>
        <end position="247"/>
    </location>
</feature>
<feature type="DNA-binding region" description="Homeobox" evidence="1">
    <location>
        <begin position="68"/>
        <end position="127"/>
    </location>
</feature>
<feature type="region of interest" description="Disordered" evidence="2">
    <location>
        <begin position="194"/>
        <end position="247"/>
    </location>
</feature>
<feature type="compositionally biased region" description="Low complexity" evidence="2">
    <location>
        <begin position="194"/>
        <end position="209"/>
    </location>
</feature>
<feature type="compositionally biased region" description="Low complexity" evidence="2">
    <location>
        <begin position="233"/>
        <end position="247"/>
    </location>
</feature>
<feature type="mutagenesis site" description="In ED7; partial loss of function." evidence="4">
    <original>R</original>
    <variation>C</variation>
    <location>
        <position position="119"/>
    </location>
</feature>